<dbReference type="EMBL" id="AB046839">
    <property type="protein sequence ID" value="BAB13445.1"/>
    <property type="status" value="ALT_INIT"/>
    <property type="molecule type" value="mRNA"/>
</dbReference>
<dbReference type="EMBL" id="AL133215">
    <property type="status" value="NOT_ANNOTATED_CDS"/>
    <property type="molecule type" value="Genomic_DNA"/>
</dbReference>
<dbReference type="EMBL" id="BC051030">
    <property type="protein sequence ID" value="AAH51030.1"/>
    <property type="molecule type" value="mRNA"/>
</dbReference>
<dbReference type="EMBL" id="BC128579">
    <property type="protein sequence ID" value="AAI28580.1"/>
    <property type="molecule type" value="mRNA"/>
</dbReference>
<dbReference type="CCDS" id="CCDS55724.1">
    <molecule id="Q9NTN9-3"/>
</dbReference>
<dbReference type="CCDS" id="CCDS7501.1">
    <molecule id="Q9NTN9-2"/>
</dbReference>
<dbReference type="CCDS" id="CCDS91320.1">
    <molecule id="Q9NTN9-1"/>
</dbReference>
<dbReference type="RefSeq" id="NP_001190173.1">
    <molecule id="Q9NTN9-3"/>
    <property type="nucleotide sequence ID" value="NM_001203244.1"/>
</dbReference>
<dbReference type="RefSeq" id="NP_001380854.1">
    <molecule id="Q9NTN9-1"/>
    <property type="nucleotide sequence ID" value="NM_001393925.1"/>
</dbReference>
<dbReference type="RefSeq" id="NP_060363.2">
    <molecule id="Q9NTN9-2"/>
    <property type="nucleotide sequence ID" value="NM_017893.3"/>
</dbReference>
<dbReference type="RefSeq" id="XP_005270065.1">
    <property type="nucleotide sequence ID" value="XM_005270008.2"/>
</dbReference>
<dbReference type="SMR" id="Q9NTN9"/>
<dbReference type="BioGRID" id="121738">
    <property type="interactions" value="64"/>
</dbReference>
<dbReference type="FunCoup" id="Q9NTN9">
    <property type="interactions" value="374"/>
</dbReference>
<dbReference type="IntAct" id="Q9NTN9">
    <property type="interactions" value="70"/>
</dbReference>
<dbReference type="STRING" id="9606.ENSP00000210633"/>
<dbReference type="GlyConnect" id="1735">
    <property type="glycosylation" value="1 N-Linked glycan (1 site)"/>
</dbReference>
<dbReference type="GlyCosmos" id="Q9NTN9">
    <property type="glycosylation" value="6 sites, 1 glycan"/>
</dbReference>
<dbReference type="GlyGen" id="Q9NTN9">
    <property type="glycosylation" value="8 sites, 9 N-linked glycans (4 sites)"/>
</dbReference>
<dbReference type="iPTMnet" id="Q9NTN9"/>
<dbReference type="PhosphoSitePlus" id="Q9NTN9"/>
<dbReference type="SwissPalm" id="Q9NTN9"/>
<dbReference type="BioMuta" id="SEMA4G"/>
<dbReference type="DMDM" id="13633937"/>
<dbReference type="jPOST" id="Q9NTN9"/>
<dbReference type="MassIVE" id="Q9NTN9"/>
<dbReference type="PaxDb" id="9606-ENSP00000210633"/>
<dbReference type="PeptideAtlas" id="Q9NTN9"/>
<dbReference type="ProteomicsDB" id="82627">
    <molecule id="Q9NTN9-1"/>
</dbReference>
<dbReference type="ProteomicsDB" id="82628">
    <molecule id="Q9NTN9-2"/>
</dbReference>
<dbReference type="ProteomicsDB" id="82629">
    <molecule id="Q9NTN9-3"/>
</dbReference>
<dbReference type="Antibodypedia" id="31221">
    <property type="antibodies" value="62 antibodies from 17 providers"/>
</dbReference>
<dbReference type="DNASU" id="57715"/>
<dbReference type="Ensembl" id="ENST00000210633.4">
    <molecule id="Q9NTN9-2"/>
    <property type="protein sequence ID" value="ENSP00000210633.3"/>
    <property type="gene ID" value="ENSG00000095539.16"/>
</dbReference>
<dbReference type="Ensembl" id="ENST00000370250.8">
    <molecule id="Q9NTN9-1"/>
    <property type="protein sequence ID" value="ENSP00000359270.4"/>
    <property type="gene ID" value="ENSG00000095539.16"/>
</dbReference>
<dbReference type="Ensembl" id="ENST00000517724.5">
    <molecule id="Q9NTN9-3"/>
    <property type="protein sequence ID" value="ENSP00000430175.1"/>
    <property type="gene ID" value="ENSG00000095539.16"/>
</dbReference>
<dbReference type="Ensembl" id="ENST00000521006.5">
    <molecule id="Q9NTN9-1"/>
    <property type="protein sequence ID" value="ENSP00000430881.1"/>
    <property type="gene ID" value="ENSG00000095539.16"/>
</dbReference>
<dbReference type="GeneID" id="57715"/>
<dbReference type="KEGG" id="hsa:57715"/>
<dbReference type="MANE-Select" id="ENST00000210633.4">
    <molecule id="Q9NTN9-2"/>
    <property type="protein sequence ID" value="ENSP00000210633.3"/>
    <property type="RefSeq nucleotide sequence ID" value="NM_017893.4"/>
    <property type="RefSeq protein sequence ID" value="NP_060363.2"/>
</dbReference>
<dbReference type="UCSC" id="uc001krv.4">
    <molecule id="Q9NTN9-1"/>
    <property type="organism name" value="human"/>
</dbReference>
<dbReference type="AGR" id="HGNC:10735"/>
<dbReference type="CTD" id="57715"/>
<dbReference type="DisGeNET" id="57715"/>
<dbReference type="GeneCards" id="SEMA4G"/>
<dbReference type="HGNC" id="HGNC:10735">
    <property type="gene designation" value="SEMA4G"/>
</dbReference>
<dbReference type="HPA" id="ENSG00000095539">
    <property type="expression patterns" value="Tissue enhanced (intestine)"/>
</dbReference>
<dbReference type="MalaCards" id="SEMA4G"/>
<dbReference type="MIM" id="618991">
    <property type="type" value="gene"/>
</dbReference>
<dbReference type="neXtProt" id="NX_Q9NTN9"/>
<dbReference type="OpenTargets" id="ENSG00000095539"/>
<dbReference type="PharmGKB" id="PA35657"/>
<dbReference type="VEuPathDB" id="HostDB:ENSG00000095539"/>
<dbReference type="eggNOG" id="KOG3611">
    <property type="taxonomic scope" value="Eukaryota"/>
</dbReference>
<dbReference type="GeneTree" id="ENSGT00940000157186"/>
<dbReference type="HOGENOM" id="CLU_009051_4_2_1"/>
<dbReference type="InParanoid" id="Q9NTN9"/>
<dbReference type="OMA" id="SGPYMEY"/>
<dbReference type="OrthoDB" id="9988752at2759"/>
<dbReference type="PAN-GO" id="Q9NTN9">
    <property type="GO annotations" value="10 GO annotations based on evolutionary models"/>
</dbReference>
<dbReference type="PhylomeDB" id="Q9NTN9"/>
<dbReference type="TreeFam" id="TF316102"/>
<dbReference type="PathwayCommons" id="Q9NTN9"/>
<dbReference type="SignaLink" id="Q9NTN9"/>
<dbReference type="BioGRID-ORCS" id="57715">
    <property type="hits" value="9 hits in 1158 CRISPR screens"/>
</dbReference>
<dbReference type="ChiTaRS" id="SEMA4G">
    <property type="organism name" value="human"/>
</dbReference>
<dbReference type="GeneWiki" id="SEMA4G"/>
<dbReference type="GenomeRNAi" id="57715"/>
<dbReference type="Pharos" id="Q9NTN9">
    <property type="development level" value="Tbio"/>
</dbReference>
<dbReference type="PRO" id="PR:Q9NTN9"/>
<dbReference type="Proteomes" id="UP000005640">
    <property type="component" value="Chromosome 10"/>
</dbReference>
<dbReference type="RNAct" id="Q9NTN9">
    <property type="molecule type" value="protein"/>
</dbReference>
<dbReference type="Bgee" id="ENSG00000095539">
    <property type="expression patterns" value="Expressed in mucosa of transverse colon and 123 other cell types or tissues"/>
</dbReference>
<dbReference type="ExpressionAtlas" id="Q9NTN9">
    <property type="expression patterns" value="baseline and differential"/>
</dbReference>
<dbReference type="GO" id="GO:0005886">
    <property type="term" value="C:plasma membrane"/>
    <property type="evidence" value="ECO:0000318"/>
    <property type="project" value="GO_Central"/>
</dbReference>
<dbReference type="GO" id="GO:0045499">
    <property type="term" value="F:chemorepellent activity"/>
    <property type="evidence" value="ECO:0000318"/>
    <property type="project" value="GO_Central"/>
</dbReference>
<dbReference type="GO" id="GO:0038191">
    <property type="term" value="F:neuropilin binding"/>
    <property type="evidence" value="ECO:0000318"/>
    <property type="project" value="GO_Central"/>
</dbReference>
<dbReference type="GO" id="GO:0030215">
    <property type="term" value="F:semaphorin receptor binding"/>
    <property type="evidence" value="ECO:0000318"/>
    <property type="project" value="GO_Central"/>
</dbReference>
<dbReference type="GO" id="GO:0007411">
    <property type="term" value="P:axon guidance"/>
    <property type="evidence" value="ECO:0000318"/>
    <property type="project" value="GO_Central"/>
</dbReference>
<dbReference type="GO" id="GO:0050919">
    <property type="term" value="P:negative chemotaxis"/>
    <property type="evidence" value="ECO:0000318"/>
    <property type="project" value="GO_Central"/>
</dbReference>
<dbReference type="GO" id="GO:0001755">
    <property type="term" value="P:neural crest cell migration"/>
    <property type="evidence" value="ECO:0000318"/>
    <property type="project" value="GO_Central"/>
</dbReference>
<dbReference type="GO" id="GO:0030335">
    <property type="term" value="P:positive regulation of cell migration"/>
    <property type="evidence" value="ECO:0000318"/>
    <property type="project" value="GO_Central"/>
</dbReference>
<dbReference type="GO" id="GO:0071526">
    <property type="term" value="P:semaphorin-plexin signaling pathway"/>
    <property type="evidence" value="ECO:0000318"/>
    <property type="project" value="GO_Central"/>
</dbReference>
<dbReference type="CDD" id="cd05872">
    <property type="entry name" value="Ig_Sema4B_like"/>
    <property type="match status" value="1"/>
</dbReference>
<dbReference type="CDD" id="cd11262">
    <property type="entry name" value="Sema_4G"/>
    <property type="match status" value="1"/>
</dbReference>
<dbReference type="FunFam" id="2.130.10.10:FF:000033">
    <property type="entry name" value="Semaphorin 4B"/>
    <property type="match status" value="1"/>
</dbReference>
<dbReference type="FunFam" id="2.60.40.10:FF:000799">
    <property type="entry name" value="Semaphorin 4G"/>
    <property type="match status" value="1"/>
</dbReference>
<dbReference type="FunFam" id="3.30.1680.10:FF:000023">
    <property type="entry name" value="semaphorin-4G isoform X2"/>
    <property type="match status" value="1"/>
</dbReference>
<dbReference type="Gene3D" id="2.60.40.10">
    <property type="entry name" value="Immunoglobulins"/>
    <property type="match status" value="1"/>
</dbReference>
<dbReference type="Gene3D" id="3.30.1680.10">
    <property type="entry name" value="ligand-binding face of the semaphorins, domain 2"/>
    <property type="match status" value="1"/>
</dbReference>
<dbReference type="Gene3D" id="2.130.10.10">
    <property type="entry name" value="YVTN repeat-like/Quinoprotein amine dehydrogenase"/>
    <property type="match status" value="1"/>
</dbReference>
<dbReference type="InterPro" id="IPR007110">
    <property type="entry name" value="Ig-like_dom"/>
</dbReference>
<dbReference type="InterPro" id="IPR036179">
    <property type="entry name" value="Ig-like_dom_sf"/>
</dbReference>
<dbReference type="InterPro" id="IPR013783">
    <property type="entry name" value="Ig-like_fold"/>
</dbReference>
<dbReference type="InterPro" id="IPR003599">
    <property type="entry name" value="Ig_sub"/>
</dbReference>
<dbReference type="InterPro" id="IPR002165">
    <property type="entry name" value="Plexin_repeat"/>
</dbReference>
<dbReference type="InterPro" id="IPR016201">
    <property type="entry name" value="PSI"/>
</dbReference>
<dbReference type="InterPro" id="IPR001627">
    <property type="entry name" value="Semap_dom"/>
</dbReference>
<dbReference type="InterPro" id="IPR036352">
    <property type="entry name" value="Semap_dom_sf"/>
</dbReference>
<dbReference type="InterPro" id="IPR027231">
    <property type="entry name" value="Semaphorin"/>
</dbReference>
<dbReference type="InterPro" id="IPR015943">
    <property type="entry name" value="WD40/YVTN_repeat-like_dom_sf"/>
</dbReference>
<dbReference type="PANTHER" id="PTHR11036">
    <property type="entry name" value="SEMAPHORIN"/>
    <property type="match status" value="1"/>
</dbReference>
<dbReference type="PANTHER" id="PTHR11036:SF17">
    <property type="entry name" value="SEMAPHORIN-4G"/>
    <property type="match status" value="1"/>
</dbReference>
<dbReference type="Pfam" id="PF01437">
    <property type="entry name" value="PSI"/>
    <property type="match status" value="1"/>
</dbReference>
<dbReference type="Pfam" id="PF01403">
    <property type="entry name" value="Sema"/>
    <property type="match status" value="1"/>
</dbReference>
<dbReference type="SMART" id="SM00409">
    <property type="entry name" value="IG"/>
    <property type="match status" value="1"/>
</dbReference>
<dbReference type="SMART" id="SM00423">
    <property type="entry name" value="PSI"/>
    <property type="match status" value="1"/>
</dbReference>
<dbReference type="SMART" id="SM00630">
    <property type="entry name" value="Sema"/>
    <property type="match status" value="1"/>
</dbReference>
<dbReference type="SUPFAM" id="SSF48726">
    <property type="entry name" value="Immunoglobulin"/>
    <property type="match status" value="1"/>
</dbReference>
<dbReference type="SUPFAM" id="SSF103575">
    <property type="entry name" value="Plexin repeat"/>
    <property type="match status" value="1"/>
</dbReference>
<dbReference type="SUPFAM" id="SSF101912">
    <property type="entry name" value="Sema domain"/>
    <property type="match status" value="1"/>
</dbReference>
<dbReference type="PROSITE" id="PS50835">
    <property type="entry name" value="IG_LIKE"/>
    <property type="match status" value="1"/>
</dbReference>
<dbReference type="PROSITE" id="PS51004">
    <property type="entry name" value="SEMA"/>
    <property type="match status" value="1"/>
</dbReference>
<feature type="signal peptide" evidence="3">
    <location>
        <begin position="1"/>
        <end position="17"/>
    </location>
</feature>
<feature type="chain" id="PRO_0000032333" description="Semaphorin-4G">
    <location>
        <begin position="18"/>
        <end position="838"/>
    </location>
</feature>
<feature type="topological domain" description="Extracellular" evidence="3">
    <location>
        <begin position="18"/>
        <end position="675"/>
    </location>
</feature>
<feature type="transmembrane region" description="Helical" evidence="3">
    <location>
        <begin position="676"/>
        <end position="696"/>
    </location>
</feature>
<feature type="topological domain" description="Cytoplasmic" evidence="3">
    <location>
        <begin position="697"/>
        <end position="838"/>
    </location>
</feature>
<feature type="domain" description="Sema" evidence="4">
    <location>
        <begin position="35"/>
        <end position="505"/>
    </location>
</feature>
<feature type="domain" description="PSI">
    <location>
        <begin position="507"/>
        <end position="558"/>
    </location>
</feature>
<feature type="domain" description="Ig-like C2-type">
    <location>
        <begin position="567"/>
        <end position="649"/>
    </location>
</feature>
<feature type="region of interest" description="Disordered" evidence="5">
    <location>
        <begin position="723"/>
        <end position="777"/>
    </location>
</feature>
<feature type="compositionally biased region" description="Acidic residues" evidence="5">
    <location>
        <begin position="736"/>
        <end position="745"/>
    </location>
</feature>
<feature type="compositionally biased region" description="Pro residues" evidence="5">
    <location>
        <begin position="763"/>
        <end position="775"/>
    </location>
</feature>
<feature type="modified residue" description="Phosphoserine" evidence="8">
    <location>
        <position position="795"/>
    </location>
</feature>
<feature type="modified residue" description="Phosphoserine" evidence="2">
    <location>
        <position position="837"/>
    </location>
</feature>
<feature type="glycosylation site" description="N-linked (GlcNAc...) asparagine" evidence="3">
    <location>
        <position position="55"/>
    </location>
</feature>
<feature type="glycosylation site" description="N-linked (GlcNAc...) asparagine" evidence="3">
    <location>
        <position position="111"/>
    </location>
</feature>
<feature type="glycosylation site" description="N-linked (GlcNAc...) asparagine" evidence="3">
    <location>
        <position position="126"/>
    </location>
</feature>
<feature type="glycosylation site" description="N-linked (GlcNAc...) asparagine" evidence="3">
    <location>
        <position position="388"/>
    </location>
</feature>
<feature type="glycosylation site" description="N-linked (GlcNAc...) asparagine" evidence="3">
    <location>
        <position position="542"/>
    </location>
</feature>
<feature type="glycosylation site" description="N-linked (GlcNAc...) asparagine" evidence="3">
    <location>
        <position position="598"/>
    </location>
</feature>
<feature type="disulfide bond" evidence="1">
    <location>
        <begin position="104"/>
        <end position="115"/>
    </location>
</feature>
<feature type="disulfide bond" evidence="1">
    <location>
        <begin position="133"/>
        <end position="142"/>
    </location>
</feature>
<feature type="disulfide bond" evidence="1">
    <location>
        <begin position="270"/>
        <end position="377"/>
    </location>
</feature>
<feature type="disulfide bond" evidence="1">
    <location>
        <begin position="294"/>
        <end position="337"/>
    </location>
</feature>
<feature type="disulfide bond" evidence="1">
    <location>
        <begin position="508"/>
        <end position="525"/>
    </location>
</feature>
<feature type="disulfide bond" evidence="1">
    <location>
        <begin position="517"/>
        <end position="534"/>
    </location>
</feature>
<feature type="disulfide bond" evidence="1">
    <location>
        <begin position="584"/>
        <end position="632"/>
    </location>
</feature>
<feature type="splice variant" id="VSP_035067" description="In isoform 2 and isoform 3." evidence="6">
    <original>R</original>
    <variation>RSQGSR</variation>
    <location>
        <position position="543"/>
    </location>
</feature>
<feature type="splice variant" id="VSP_043883" description="In isoform 3." evidence="6">
    <original>PPPPLKTRSVLRGDDVLLPCDQPSNLARALWLLNGSMGLSDGQGGYRVGVDGLLVTDAQPEHSGNYGCYAEENGLRTLLASYSLTVRPATPAPAPKAPATPGAQLAPDVRLLYVLAIAALGGLCLILASSLLYVACLREGRRGRRRKYSLGRASRAGGSAVQLQTVSGQCPGEEDEGDDEGAGGLEGSCLQIIPGEGAPAPPPPPPPPPPAELTNGLVALPSRLRRMNGNSYVLLRQSNNGVPAGPCSFAEELSRILEKRKHTQLVEQLDESSV</original>
    <variation>RALQVHMGSMSPPSAWPCVLDGPETRQDLCQPPKPCVHSHAHMEECLSAGLQCPHPHLLLVHSCFIPASGLGVPSQLPHPIWSSSPAPCGDLFVKSLGTGQPGEVRLHHSPPLPSCVALVNQPPHSPWSFSRV</variation>
    <location>
        <begin position="565"/>
        <end position="838"/>
    </location>
</feature>
<keyword id="KW-0025">Alternative splicing</keyword>
<keyword id="KW-1003">Cell membrane</keyword>
<keyword id="KW-0217">Developmental protein</keyword>
<keyword id="KW-0221">Differentiation</keyword>
<keyword id="KW-1015">Disulfide bond</keyword>
<keyword id="KW-0325">Glycoprotein</keyword>
<keyword id="KW-0393">Immunoglobulin domain</keyword>
<keyword id="KW-0472">Membrane</keyword>
<keyword id="KW-0524">Neurogenesis</keyword>
<keyword id="KW-0597">Phosphoprotein</keyword>
<keyword id="KW-1267">Proteomics identification</keyword>
<keyword id="KW-1185">Reference proteome</keyword>
<keyword id="KW-0732">Signal</keyword>
<keyword id="KW-0812">Transmembrane</keyword>
<keyword id="KW-1133">Transmembrane helix</keyword>
<gene>
    <name type="primary">SEMA4G</name>
    <name type="synonym">KIAA1619</name>
</gene>
<proteinExistence type="evidence at protein level"/>
<protein>
    <recommendedName>
        <fullName>Semaphorin-4G</fullName>
    </recommendedName>
</protein>
<evidence type="ECO:0000250" key="1"/>
<evidence type="ECO:0000250" key="2">
    <source>
        <dbReference type="UniProtKB" id="Q9WUH7"/>
    </source>
</evidence>
<evidence type="ECO:0000255" key="3"/>
<evidence type="ECO:0000255" key="4">
    <source>
        <dbReference type="PROSITE-ProRule" id="PRU00352"/>
    </source>
</evidence>
<evidence type="ECO:0000256" key="5">
    <source>
        <dbReference type="SAM" id="MobiDB-lite"/>
    </source>
</evidence>
<evidence type="ECO:0000303" key="6">
    <source>
    </source>
</evidence>
<evidence type="ECO:0000305" key="7"/>
<evidence type="ECO:0007744" key="8">
    <source>
    </source>
</evidence>
<sequence>MWGRLWPLLLSILTATAVPGPSLRRPSRELDATPRMTIPYEELSGTRHFKGQAQNYSTLLLEEASARLLVGARGALFSLSANDIGDGAHKEIHWEASPEMQSKCHQKGKNNQTECFNHVRFLQRLNSTHLYACGTHAFQPLCAAIDAEAFTLPTSFEEGKEKCPYDPARGFTGLIIDGGLYTATRYEFRSIPDIRRSRHPHSLRTEETPMHWLNDAEFVFSVLVRESKASAVGDDDKVYYFFTERATEEGSGSFTQSRSSHRVARVARVCKGDLGGKKILQKKWTSFLKARLICHIPLYETLRGVCSLDAETSSRTHFYAAFTLSTQWKTLEASAICRYDLAEIQAVFAGPYMEYQDGSRRWGRYEGGVPEPRPGSCITDSLRSQGYNSSQDLPSLVLDFVKLHPLMARPVVPTRGRPLLLKRNIRYTHLTGTPVTTPAGPTYDLLFLGTADGWIHKAVVLGSGMHIIEETQVFRESQSVENLVISLLQHSLYVGAPSGVIQLPLSSCSRYRSCYDCILARDPYCGWDPGTHACAAATTIANRTALIQDIERGNRGCESSRDTGPPPPLKTRSVLRGDDVLLPCDQPSNLARALWLLNGSMGLSDGQGGYRVGVDGLLVTDAQPEHSGNYGCYAEENGLRTLLASYSLTVRPATPAPAPKAPATPGAQLAPDVRLLYVLAIAALGGLCLILASSLLYVACLREGRRGRRRKYSLGRASRAGGSAVQLQTVSGQCPGEEDEGDDEGAGGLEGSCLQIIPGEGAPAPPPPPPPPPPAELTNGLVALPSRLRRMNGNSYVLLRQSNNGVPAGPCSFAEELSRILEKRKHTQLVEQLDESSV</sequence>
<name>SEM4G_HUMAN</name>
<reference key="1">
    <citation type="journal article" date="2000" name="DNA Res.">
        <title>Prediction of the coding sequences of unidentified human genes. XVIII. The complete sequences of 100 new cDNA clones from brain which code for large proteins in vitro.</title>
        <authorList>
            <person name="Nagase T."/>
            <person name="Kikuno R."/>
            <person name="Nakayama M."/>
            <person name="Hirosawa M."/>
            <person name="Ohara O."/>
        </authorList>
    </citation>
    <scope>NUCLEOTIDE SEQUENCE [LARGE SCALE MRNA] (ISOFORM 1)</scope>
    <source>
        <tissue>Brain</tissue>
    </source>
</reference>
<reference key="2">
    <citation type="journal article" date="2004" name="Nature">
        <title>The DNA sequence and comparative analysis of human chromosome 10.</title>
        <authorList>
            <person name="Deloukas P."/>
            <person name="Earthrowl M.E."/>
            <person name="Grafham D.V."/>
            <person name="Rubenfield M."/>
            <person name="French L."/>
            <person name="Steward C.A."/>
            <person name="Sims S.K."/>
            <person name="Jones M.C."/>
            <person name="Searle S."/>
            <person name="Scott C."/>
            <person name="Howe K."/>
            <person name="Hunt S.E."/>
            <person name="Andrews T.D."/>
            <person name="Gilbert J.G.R."/>
            <person name="Swarbreck D."/>
            <person name="Ashurst J.L."/>
            <person name="Taylor A."/>
            <person name="Battles J."/>
            <person name="Bird C.P."/>
            <person name="Ainscough R."/>
            <person name="Almeida J.P."/>
            <person name="Ashwell R.I.S."/>
            <person name="Ambrose K.D."/>
            <person name="Babbage A.K."/>
            <person name="Bagguley C.L."/>
            <person name="Bailey J."/>
            <person name="Banerjee R."/>
            <person name="Bates K."/>
            <person name="Beasley H."/>
            <person name="Bray-Allen S."/>
            <person name="Brown A.J."/>
            <person name="Brown J.Y."/>
            <person name="Burford D.C."/>
            <person name="Burrill W."/>
            <person name="Burton J."/>
            <person name="Cahill P."/>
            <person name="Camire D."/>
            <person name="Carter N.P."/>
            <person name="Chapman J.C."/>
            <person name="Clark S.Y."/>
            <person name="Clarke G."/>
            <person name="Clee C.M."/>
            <person name="Clegg S."/>
            <person name="Corby N."/>
            <person name="Coulson A."/>
            <person name="Dhami P."/>
            <person name="Dutta I."/>
            <person name="Dunn M."/>
            <person name="Faulkner L."/>
            <person name="Frankish A."/>
            <person name="Frankland J.A."/>
            <person name="Garner P."/>
            <person name="Garnett J."/>
            <person name="Gribble S."/>
            <person name="Griffiths C."/>
            <person name="Grocock R."/>
            <person name="Gustafson E."/>
            <person name="Hammond S."/>
            <person name="Harley J.L."/>
            <person name="Hart E."/>
            <person name="Heath P.D."/>
            <person name="Ho T.P."/>
            <person name="Hopkins B."/>
            <person name="Horne J."/>
            <person name="Howden P.J."/>
            <person name="Huckle E."/>
            <person name="Hynds C."/>
            <person name="Johnson C."/>
            <person name="Johnson D."/>
            <person name="Kana A."/>
            <person name="Kay M."/>
            <person name="Kimberley A.M."/>
            <person name="Kershaw J.K."/>
            <person name="Kokkinaki M."/>
            <person name="Laird G.K."/>
            <person name="Lawlor S."/>
            <person name="Lee H.M."/>
            <person name="Leongamornlert D.A."/>
            <person name="Laird G."/>
            <person name="Lloyd C."/>
            <person name="Lloyd D.M."/>
            <person name="Loveland J."/>
            <person name="Lovell J."/>
            <person name="McLaren S."/>
            <person name="McLay K.E."/>
            <person name="McMurray A."/>
            <person name="Mashreghi-Mohammadi M."/>
            <person name="Matthews L."/>
            <person name="Milne S."/>
            <person name="Nickerson T."/>
            <person name="Nguyen M."/>
            <person name="Overton-Larty E."/>
            <person name="Palmer S.A."/>
            <person name="Pearce A.V."/>
            <person name="Peck A.I."/>
            <person name="Pelan S."/>
            <person name="Phillimore B."/>
            <person name="Porter K."/>
            <person name="Rice C.M."/>
            <person name="Rogosin A."/>
            <person name="Ross M.T."/>
            <person name="Sarafidou T."/>
            <person name="Sehra H.K."/>
            <person name="Shownkeen R."/>
            <person name="Skuce C.D."/>
            <person name="Smith M."/>
            <person name="Standring L."/>
            <person name="Sycamore N."/>
            <person name="Tester J."/>
            <person name="Thorpe A."/>
            <person name="Torcasso W."/>
            <person name="Tracey A."/>
            <person name="Tromans A."/>
            <person name="Tsolas J."/>
            <person name="Wall M."/>
            <person name="Walsh J."/>
            <person name="Wang H."/>
            <person name="Weinstock K."/>
            <person name="West A.P."/>
            <person name="Willey D.L."/>
            <person name="Whitehead S.L."/>
            <person name="Wilming L."/>
            <person name="Wray P.W."/>
            <person name="Young L."/>
            <person name="Chen Y."/>
            <person name="Lovering R.C."/>
            <person name="Moschonas N.K."/>
            <person name="Siebert R."/>
            <person name="Fechtel K."/>
            <person name="Bentley D."/>
            <person name="Durbin R.M."/>
            <person name="Hubbard T."/>
            <person name="Doucette-Stamm L."/>
            <person name="Beck S."/>
            <person name="Smith D.R."/>
            <person name="Rogers J."/>
        </authorList>
    </citation>
    <scope>NUCLEOTIDE SEQUENCE [LARGE SCALE GENOMIC DNA]</scope>
</reference>
<reference key="3">
    <citation type="journal article" date="2004" name="Genome Res.">
        <title>The status, quality, and expansion of the NIH full-length cDNA project: the Mammalian Gene Collection (MGC).</title>
        <authorList>
            <consortium name="The MGC Project Team"/>
        </authorList>
    </citation>
    <scope>NUCLEOTIDE SEQUENCE [LARGE SCALE MRNA] (ISOFORMS 2 AND 3)</scope>
    <source>
        <tissue>Brain</tissue>
    </source>
</reference>
<reference key="4">
    <citation type="journal article" date="2013" name="J. Proteome Res.">
        <title>Toward a comprehensive characterization of a human cancer cell phosphoproteome.</title>
        <authorList>
            <person name="Zhou H."/>
            <person name="Di Palma S."/>
            <person name="Preisinger C."/>
            <person name="Peng M."/>
            <person name="Polat A.N."/>
            <person name="Heck A.J."/>
            <person name="Mohammed S."/>
        </authorList>
    </citation>
    <scope>PHOSPHORYLATION [LARGE SCALE ANALYSIS] AT SER-795</scope>
    <scope>IDENTIFICATION BY MASS SPECTROMETRY [LARGE SCALE ANALYSIS]</scope>
    <source>
        <tissue>Erythroleukemia</tissue>
    </source>
</reference>
<organism>
    <name type="scientific">Homo sapiens</name>
    <name type="common">Human</name>
    <dbReference type="NCBI Taxonomy" id="9606"/>
    <lineage>
        <taxon>Eukaryota</taxon>
        <taxon>Metazoa</taxon>
        <taxon>Chordata</taxon>
        <taxon>Craniata</taxon>
        <taxon>Vertebrata</taxon>
        <taxon>Euteleostomi</taxon>
        <taxon>Mammalia</taxon>
        <taxon>Eutheria</taxon>
        <taxon>Euarchontoglires</taxon>
        <taxon>Primates</taxon>
        <taxon>Haplorrhini</taxon>
        <taxon>Catarrhini</taxon>
        <taxon>Hominidae</taxon>
        <taxon>Homo</taxon>
    </lineage>
</organism>
<accession>Q9NTN9</accession>
<accession>A1A5C6</accession>
<accession>A6NJY8</accession>
<accession>Q58EY1</accession>
<accession>Q9HCF3</accession>
<comment type="function">
    <text evidence="1">Cell surface receptor for PLXNB2. May play a role in axon guidance (By similarity).</text>
</comment>
<comment type="subunit">
    <text evidence="1">Interacts with PLXNB2.</text>
</comment>
<comment type="interaction">
    <interactant intactId="EBI-6447340">
        <id>Q9NTN9</id>
    </interactant>
    <interactant intactId="EBI-349832">
        <id>Q9HD26</id>
        <label>GOPC</label>
    </interactant>
    <organismsDiffer>false</organismsDiffer>
    <experiments>3</experiments>
</comment>
<comment type="interaction">
    <interactant intactId="EBI-6447340">
        <id>Q9NTN9</id>
    </interactant>
    <interactant intactId="EBI-358993">
        <id>Q15645</id>
        <label>TRIP13</label>
    </interactant>
    <organismsDiffer>false</organismsDiffer>
    <experiments>3</experiments>
</comment>
<comment type="interaction">
    <interactant intactId="EBI-12913124">
        <id>Q9NTN9-2</id>
    </interactant>
    <interactant intactId="EBI-11343438">
        <id>Q3SXY8</id>
        <label>ARL13B</label>
    </interactant>
    <organismsDiffer>false</organismsDiffer>
    <experiments>3</experiments>
</comment>
<comment type="interaction">
    <interactant intactId="EBI-12913124">
        <id>Q9NTN9-2</id>
    </interactant>
    <interactant intactId="EBI-6942903">
        <id>Q96BA8</id>
        <label>CREB3L1</label>
    </interactant>
    <organismsDiffer>false</organismsDiffer>
    <experiments>5</experiments>
</comment>
<comment type="interaction">
    <interactant intactId="EBI-12913124">
        <id>Q9NTN9-2</id>
    </interactant>
    <interactant intactId="EBI-1052713">
        <id>O15121</id>
        <label>DEGS1</label>
    </interactant>
    <organismsDiffer>false</organismsDiffer>
    <experiments>3</experiments>
</comment>
<comment type="interaction">
    <interactant intactId="EBI-12913124">
        <id>Q9NTN9-2</id>
    </interactant>
    <interactant intactId="EBI-1044859">
        <id>Q9UBN6</id>
        <label>TNFRSF10D</label>
    </interactant>
    <organismsDiffer>false</organismsDiffer>
    <experiments>3</experiments>
</comment>
<comment type="interaction">
    <interactant intactId="EBI-9089805">
        <id>Q9NTN9-3</id>
    </interactant>
    <interactant intactId="EBI-11954292">
        <id>Q86V38</id>
        <label>ATN1</label>
    </interactant>
    <organismsDiffer>false</organismsDiffer>
    <experiments>3</experiments>
</comment>
<comment type="interaction">
    <interactant intactId="EBI-9089805">
        <id>Q9NTN9-3</id>
    </interactant>
    <interactant intactId="EBI-1058722">
        <id>Q13554</id>
        <label>CAMK2B</label>
    </interactant>
    <organismsDiffer>false</organismsDiffer>
    <experiments>3</experiments>
</comment>
<comment type="interaction">
    <interactant intactId="EBI-9089805">
        <id>Q9NTN9-3</id>
    </interactant>
    <interactant intactId="EBI-718729">
        <id>P55212</id>
        <label>CASP6</label>
    </interactant>
    <organismsDiffer>false</organismsDiffer>
    <experiments>3</experiments>
</comment>
<comment type="interaction">
    <interactant intactId="EBI-9089805">
        <id>Q9NTN9-3</id>
    </interactant>
    <interactant intactId="EBI-355710">
        <id>P48643</id>
        <label>CCT5</label>
    </interactant>
    <organismsDiffer>false</organismsDiffer>
    <experiments>3</experiments>
</comment>
<comment type="interaction">
    <interactant intactId="EBI-9089805">
        <id>Q9NTN9-3</id>
    </interactant>
    <interactant intactId="EBI-745535">
        <id>Q8NI60</id>
        <label>COQ8A</label>
    </interactant>
    <organismsDiffer>false</organismsDiffer>
    <experiments>3</experiments>
</comment>
<comment type="interaction">
    <interactant intactId="EBI-9089805">
        <id>Q9NTN9-3</id>
    </interactant>
    <interactant intactId="EBI-6875961">
        <id>P02489</id>
        <label>CRYAA</label>
    </interactant>
    <organismsDiffer>false</organismsDiffer>
    <experiments>3</experiments>
</comment>
<comment type="interaction">
    <interactant intactId="EBI-9089805">
        <id>Q9NTN9-3</id>
    </interactant>
    <interactant intactId="EBI-446479">
        <id>P99999</id>
        <label>CYCS</label>
    </interactant>
    <organismsDiffer>false</organismsDiffer>
    <experiments>3</experiments>
</comment>
<comment type="interaction">
    <interactant intactId="EBI-9089805">
        <id>Q9NTN9-3</id>
    </interactant>
    <interactant intactId="EBI-348399">
        <id>P22607</id>
        <label>FGFR3</label>
    </interactant>
    <organismsDiffer>false</organismsDiffer>
    <experiments>3</experiments>
</comment>
<comment type="interaction">
    <interactant intactId="EBI-9089805">
        <id>Q9NTN9-3</id>
    </interactant>
    <interactant intactId="EBI-8285963">
        <id>Q14957</id>
        <label>GRIN2C</label>
    </interactant>
    <organismsDiffer>false</organismsDiffer>
    <experiments>3</experiments>
</comment>
<comment type="interaction">
    <interactant intactId="EBI-9089805">
        <id>Q9NTN9-3</id>
    </interactant>
    <interactant intactId="EBI-747754">
        <id>P28799</id>
        <label>GRN</label>
    </interactant>
    <organismsDiffer>false</organismsDiffer>
    <experiments>3</experiments>
</comment>
<comment type="interaction">
    <interactant intactId="EBI-9089805">
        <id>Q9NTN9-3</id>
    </interactant>
    <interactant intactId="EBI-351506">
        <id>P06396</id>
        <label>GSN</label>
    </interactant>
    <organismsDiffer>false</organismsDiffer>
    <experiments>3</experiments>
</comment>
<comment type="interaction">
    <interactant intactId="EBI-9089805">
        <id>Q9NTN9-3</id>
    </interactant>
    <interactant intactId="EBI-712096">
        <id>P30519</id>
        <label>HMOX2</label>
    </interactant>
    <organismsDiffer>false</organismsDiffer>
    <experiments>3</experiments>
</comment>
<comment type="interaction">
    <interactant intactId="EBI-9089805">
        <id>Q9NTN9-3</id>
    </interactant>
    <interactant intactId="EBI-352682">
        <id>P04792</id>
        <label>HSPB1</label>
    </interactant>
    <organismsDiffer>false</organismsDiffer>
    <experiments>3</experiments>
</comment>
<comment type="interaction">
    <interactant intactId="EBI-9089805">
        <id>Q9NTN9-3</id>
    </interactant>
    <interactant intactId="EBI-10975473">
        <id>O60333-2</id>
        <label>KIF1B</label>
    </interactant>
    <organismsDiffer>false</organismsDiffer>
    <experiments>3</experiments>
</comment>
<comment type="interaction">
    <interactant intactId="EBI-9089805">
        <id>Q9NTN9-3</id>
    </interactant>
    <interactant intactId="EBI-2432309">
        <id>Q92876</id>
        <label>KLK6</label>
    </interactant>
    <organismsDiffer>false</organismsDiffer>
    <experiments>3</experiments>
</comment>
<comment type="interaction">
    <interactant intactId="EBI-9089805">
        <id>Q9NTN9-3</id>
    </interactant>
    <interactant intactId="EBI-21591415">
        <id>P13473-2</id>
        <label>LAMP2</label>
    </interactant>
    <organismsDiffer>false</organismsDiffer>
    <experiments>3</experiments>
</comment>
<comment type="interaction">
    <interactant intactId="EBI-9089805">
        <id>Q9NTN9-3</id>
    </interactant>
    <interactant intactId="EBI-1307">
        <id>Q13153</id>
        <label>PAK1</label>
    </interactant>
    <organismsDiffer>false</organismsDiffer>
    <experiments>3</experiments>
</comment>
<comment type="interaction">
    <interactant intactId="EBI-9089805">
        <id>Q9NTN9-3</id>
    </interactant>
    <interactant intactId="EBI-988601">
        <id>O43933</id>
        <label>PEX1</label>
    </interactant>
    <organismsDiffer>false</organismsDiffer>
    <experiments>3</experiments>
</comment>
<comment type="interaction">
    <interactant intactId="EBI-9089805">
        <id>Q9NTN9-3</id>
    </interactant>
    <interactant intactId="EBI-50433196">
        <id>A0A6Q8PF08</id>
        <label>PMP22</label>
    </interactant>
    <organismsDiffer>false</organismsDiffer>
    <experiments>3</experiments>
</comment>
<comment type="interaction">
    <interactant intactId="EBI-9089805">
        <id>Q9NTN9-3</id>
    </interactant>
    <interactant intactId="EBI-5280197">
        <id>O75400-2</id>
        <label>PRPF40A</label>
    </interactant>
    <organismsDiffer>false</organismsDiffer>
    <experiments>3</experiments>
</comment>
<comment type="interaction">
    <interactant intactId="EBI-9089805">
        <id>Q9NTN9-3</id>
    </interactant>
    <interactant intactId="EBI-749195">
        <id>P60891</id>
        <label>PRPS1</label>
    </interactant>
    <organismsDiffer>false</organismsDiffer>
    <experiments>3</experiments>
</comment>
<comment type="interaction">
    <interactant intactId="EBI-9089805">
        <id>Q9NTN9-3</id>
    </interactant>
    <interactant intactId="EBI-286642">
        <id>P62826</id>
        <label>RAN</label>
    </interactant>
    <organismsDiffer>false</organismsDiffer>
    <experiments>3</experiments>
</comment>
<comment type="interaction">
    <interactant intactId="EBI-9089805">
        <id>Q9NTN9-3</id>
    </interactant>
    <interactant intactId="EBI-740322">
        <id>Q93062</id>
        <label>RBPMS</label>
    </interactant>
    <organismsDiffer>false</organismsDiffer>
    <experiments>3</experiments>
</comment>
<comment type="interaction">
    <interactant intactId="EBI-9089805">
        <id>Q9NTN9-3</id>
    </interactant>
    <interactant intactId="EBI-396669">
        <id>Q9Y3C5</id>
        <label>RNF11</label>
    </interactant>
    <organismsDiffer>false</organismsDiffer>
    <experiments>3</experiments>
</comment>
<comment type="interaction">
    <interactant intactId="EBI-9089805">
        <id>Q9NTN9-3</id>
    </interactant>
    <interactant intactId="EBI-358993">
        <id>Q15645</id>
        <label>TRIP13</label>
    </interactant>
    <organismsDiffer>false</organismsDiffer>
    <experiments>3</experiments>
</comment>
<comment type="interaction">
    <interactant intactId="EBI-9089805">
        <id>Q9NTN9-3</id>
    </interactant>
    <interactant intactId="EBI-741480">
        <id>Q9UMX0</id>
        <label>UBQLN1</label>
    </interactant>
    <organismsDiffer>false</organismsDiffer>
    <experiments>3</experiments>
</comment>
<comment type="interaction">
    <interactant intactId="EBI-9089805">
        <id>Q9NTN9-3</id>
    </interactant>
    <interactant intactId="EBI-720609">
        <id>O76024</id>
        <label>WFS1</label>
    </interactant>
    <organismsDiffer>false</organismsDiffer>
    <experiments>3</experiments>
</comment>
<comment type="interaction">
    <interactant intactId="EBI-9089805">
        <id>Q9NTN9-3</id>
    </interactant>
    <interactant intactId="EBI-25900580">
        <id>Q9Y649</id>
    </interactant>
    <organismsDiffer>false</organismsDiffer>
    <experiments>3</experiments>
</comment>
<comment type="subcellular location">
    <subcellularLocation>
        <location>Cell membrane</location>
        <topology>Single-pass type I membrane protein</topology>
    </subcellularLocation>
</comment>
<comment type="alternative products">
    <event type="alternative splicing"/>
    <isoform>
        <id>Q9NTN9-1</id>
        <name>1</name>
        <sequence type="displayed"/>
    </isoform>
    <isoform>
        <id>Q9NTN9-2</id>
        <name>2</name>
        <sequence type="described" ref="VSP_035067"/>
    </isoform>
    <isoform>
        <id>Q9NTN9-3</id>
        <name>3</name>
        <sequence type="described" ref="VSP_035067 VSP_043883"/>
    </isoform>
</comment>
<comment type="similarity">
    <text evidence="7">Belongs to the semaphorin family.</text>
</comment>
<comment type="sequence caution" evidence="7">
    <conflict type="erroneous initiation">
        <sequence resource="EMBL-CDS" id="BAB13445"/>
    </conflict>
</comment>